<dbReference type="EMBL" id="BC129754">
    <property type="protein sequence ID" value="AAI29755.1"/>
    <property type="molecule type" value="mRNA"/>
</dbReference>
<dbReference type="RefSeq" id="NP_001165257.1">
    <property type="nucleotide sequence ID" value="NM_001171786.1"/>
</dbReference>
<dbReference type="GlyCosmos" id="A2VDC5">
    <property type="glycosylation" value="1 site, No reported glycans"/>
</dbReference>
<dbReference type="GeneID" id="100037218"/>
<dbReference type="KEGG" id="xla:100037218"/>
<dbReference type="AGR" id="Xenbase:XB-GENE-6077906"/>
<dbReference type="CTD" id="100037218"/>
<dbReference type="Xenbase" id="XB-GENE-6077906">
    <property type="gene designation" value="tmem167a.L"/>
</dbReference>
<dbReference type="OrthoDB" id="10034655at2759"/>
<dbReference type="Proteomes" id="UP000186698">
    <property type="component" value="Chromosome 1L"/>
</dbReference>
<dbReference type="Bgee" id="100037218">
    <property type="expression patterns" value="Expressed in pancreas and 19 other cell types or tissues"/>
</dbReference>
<dbReference type="GO" id="GO:0000139">
    <property type="term" value="C:Golgi membrane"/>
    <property type="evidence" value="ECO:0007669"/>
    <property type="project" value="UniProtKB-SubCell"/>
</dbReference>
<dbReference type="GO" id="GO:0046907">
    <property type="term" value="P:intracellular transport"/>
    <property type="evidence" value="ECO:0000318"/>
    <property type="project" value="GO_Central"/>
</dbReference>
<dbReference type="GO" id="GO:0009306">
    <property type="term" value="P:protein secretion"/>
    <property type="evidence" value="ECO:0000318"/>
    <property type="project" value="GO_Central"/>
</dbReference>
<dbReference type="InterPro" id="IPR051523">
    <property type="entry name" value="KISH_domain"/>
</dbReference>
<dbReference type="InterPro" id="IPR009653">
    <property type="entry name" value="Ksh1"/>
</dbReference>
<dbReference type="PANTHER" id="PTHR13229">
    <property type="entry name" value="PROTEIN KISH-A"/>
    <property type="match status" value="1"/>
</dbReference>
<dbReference type="Pfam" id="PF06842">
    <property type="entry name" value="DUF1242"/>
    <property type="match status" value="1"/>
</dbReference>
<name>KISHA_XENLA</name>
<sequence length="72" mass="8089">MSAIFNFQSLLIVILLLICTCAYLRSLVPNLLDKNKTGVLGIFWKCARIGERKSPYVAVCCVVMAFSILFMQ</sequence>
<protein>
    <recommendedName>
        <fullName>Protein kish-A</fullName>
    </recommendedName>
    <alternativeName>
        <fullName>Transmembrane protein 167A</fullName>
    </alternativeName>
</protein>
<organism>
    <name type="scientific">Xenopus laevis</name>
    <name type="common">African clawed frog</name>
    <dbReference type="NCBI Taxonomy" id="8355"/>
    <lineage>
        <taxon>Eukaryota</taxon>
        <taxon>Metazoa</taxon>
        <taxon>Chordata</taxon>
        <taxon>Craniata</taxon>
        <taxon>Vertebrata</taxon>
        <taxon>Euteleostomi</taxon>
        <taxon>Amphibia</taxon>
        <taxon>Batrachia</taxon>
        <taxon>Anura</taxon>
        <taxon>Pipoidea</taxon>
        <taxon>Pipidae</taxon>
        <taxon>Xenopodinae</taxon>
        <taxon>Xenopus</taxon>
        <taxon>Xenopus</taxon>
    </lineage>
</organism>
<gene>
    <name type="primary">tmem167a</name>
</gene>
<comment type="function">
    <text evidence="1">Involved in the early part of the secretory pathway.</text>
</comment>
<comment type="subcellular location">
    <subcellularLocation>
        <location evidence="1">Golgi apparatus membrane</location>
        <topology evidence="1">Single-pass type I membrane protein</topology>
    </subcellularLocation>
</comment>
<comment type="similarity">
    <text evidence="3">Belongs to the KISH family.</text>
</comment>
<feature type="signal peptide" evidence="2">
    <location>
        <begin position="1"/>
        <end position="26"/>
    </location>
</feature>
<feature type="chain" id="PRO_0000367587" description="Protein kish-A">
    <location>
        <begin position="27"/>
        <end position="72"/>
    </location>
</feature>
<feature type="topological domain" description="Extracellular" evidence="2">
    <location>
        <begin position="27"/>
        <end position="53"/>
    </location>
</feature>
<feature type="transmembrane region" description="Helical" evidence="2">
    <location>
        <begin position="54"/>
        <end position="71"/>
    </location>
</feature>
<feature type="topological domain" description="Cytoplasmic" evidence="2">
    <location>
        <position position="72"/>
    </location>
</feature>
<feature type="glycosylation site" description="N-linked (GlcNAc...) asparagine" evidence="2">
    <location>
        <position position="35"/>
    </location>
</feature>
<evidence type="ECO:0000250" key="1"/>
<evidence type="ECO:0000255" key="2"/>
<evidence type="ECO:0000305" key="3"/>
<reference key="1">
    <citation type="submission" date="2006-12" db="EMBL/GenBank/DDBJ databases">
        <authorList>
            <consortium name="NIH - Xenopus Gene Collection (XGC) project"/>
        </authorList>
    </citation>
    <scope>NUCLEOTIDE SEQUENCE [LARGE SCALE MRNA]</scope>
    <source>
        <tissue>Skin</tissue>
    </source>
</reference>
<accession>A2VDC5</accession>
<keyword id="KW-0325">Glycoprotein</keyword>
<keyword id="KW-0333">Golgi apparatus</keyword>
<keyword id="KW-0472">Membrane</keyword>
<keyword id="KW-1185">Reference proteome</keyword>
<keyword id="KW-0732">Signal</keyword>
<keyword id="KW-0812">Transmembrane</keyword>
<keyword id="KW-1133">Transmembrane helix</keyword>
<proteinExistence type="inferred from homology"/>